<protein>
    <recommendedName>
        <fullName evidence="1">Phosphomethylpyrimidine synthase</fullName>
        <ecNumber evidence="1">4.1.99.17</ecNumber>
    </recommendedName>
    <alternativeName>
        <fullName evidence="1">Hydroxymethylpyrimidine phosphate synthase</fullName>
        <shortName evidence="1">HMP-P synthase</shortName>
        <shortName evidence="1">HMP-phosphate synthase</shortName>
        <shortName evidence="1">HMPP synthase</shortName>
    </alternativeName>
    <alternativeName>
        <fullName evidence="1">Thiamine biosynthesis protein ThiC</fullName>
    </alternativeName>
</protein>
<keyword id="KW-0004">4Fe-4S</keyword>
<keyword id="KW-0408">Iron</keyword>
<keyword id="KW-0411">Iron-sulfur</keyword>
<keyword id="KW-0456">Lyase</keyword>
<keyword id="KW-0479">Metal-binding</keyword>
<keyword id="KW-0949">S-adenosyl-L-methionine</keyword>
<keyword id="KW-0784">Thiamine biosynthesis</keyword>
<keyword id="KW-0862">Zinc</keyword>
<reference key="1">
    <citation type="submission" date="2007-06" db="EMBL/GenBank/DDBJ databases">
        <title>Complete sequence of Methanococcus maripaludis C7.</title>
        <authorList>
            <consortium name="US DOE Joint Genome Institute"/>
            <person name="Copeland A."/>
            <person name="Lucas S."/>
            <person name="Lapidus A."/>
            <person name="Barry K."/>
            <person name="Glavina del Rio T."/>
            <person name="Dalin E."/>
            <person name="Tice H."/>
            <person name="Pitluck S."/>
            <person name="Clum A."/>
            <person name="Schmutz J."/>
            <person name="Larimer F."/>
            <person name="Land M."/>
            <person name="Hauser L."/>
            <person name="Kyrpides N."/>
            <person name="Anderson I."/>
            <person name="Sieprawska-Lupa M."/>
            <person name="Whitman W.B."/>
            <person name="Richardson P."/>
        </authorList>
    </citation>
    <scope>NUCLEOTIDE SEQUENCE [LARGE SCALE GENOMIC DNA]</scope>
    <source>
        <strain>C7 / ATCC BAA-1331</strain>
    </source>
</reference>
<proteinExistence type="inferred from homology"/>
<feature type="chain" id="PRO_1000004772" description="Phosphomethylpyrimidine synthase">
    <location>
        <begin position="1"/>
        <end position="426"/>
    </location>
</feature>
<feature type="binding site" evidence="1">
    <location>
        <position position="65"/>
    </location>
    <ligand>
        <name>substrate</name>
    </ligand>
</feature>
<feature type="binding site" evidence="1">
    <location>
        <position position="94"/>
    </location>
    <ligand>
        <name>substrate</name>
    </ligand>
</feature>
<feature type="binding site" evidence="1">
    <location>
        <position position="123"/>
    </location>
    <ligand>
        <name>substrate</name>
    </ligand>
</feature>
<feature type="binding site" evidence="1">
    <location>
        <position position="162"/>
    </location>
    <ligand>
        <name>substrate</name>
    </ligand>
</feature>
<feature type="binding site" evidence="1">
    <location>
        <begin position="184"/>
        <end position="186"/>
    </location>
    <ligand>
        <name>substrate</name>
    </ligand>
</feature>
<feature type="binding site" evidence="1">
    <location>
        <begin position="225"/>
        <end position="228"/>
    </location>
    <ligand>
        <name>substrate</name>
    </ligand>
</feature>
<feature type="binding site" evidence="1">
    <location>
        <position position="264"/>
    </location>
    <ligand>
        <name>substrate</name>
    </ligand>
</feature>
<feature type="binding site" evidence="1">
    <location>
        <position position="268"/>
    </location>
    <ligand>
        <name>Zn(2+)</name>
        <dbReference type="ChEBI" id="CHEBI:29105"/>
    </ligand>
</feature>
<feature type="binding site" evidence="1">
    <location>
        <position position="291"/>
    </location>
    <ligand>
        <name>substrate</name>
    </ligand>
</feature>
<feature type="binding site" evidence="1">
    <location>
        <position position="332"/>
    </location>
    <ligand>
        <name>Zn(2+)</name>
        <dbReference type="ChEBI" id="CHEBI:29105"/>
    </ligand>
</feature>
<feature type="binding site" evidence="1">
    <location>
        <position position="408"/>
    </location>
    <ligand>
        <name>[4Fe-4S] cluster</name>
        <dbReference type="ChEBI" id="CHEBI:49883"/>
        <note>4Fe-4S-S-AdoMet</note>
    </ligand>
</feature>
<feature type="binding site" evidence="1">
    <location>
        <position position="411"/>
    </location>
    <ligand>
        <name>[4Fe-4S] cluster</name>
        <dbReference type="ChEBI" id="CHEBI:49883"/>
        <note>4Fe-4S-S-AdoMet</note>
    </ligand>
</feature>
<feature type="binding site" evidence="1">
    <location>
        <position position="415"/>
    </location>
    <ligand>
        <name>[4Fe-4S] cluster</name>
        <dbReference type="ChEBI" id="CHEBI:49883"/>
        <note>4Fe-4S-S-AdoMet</note>
    </ligand>
</feature>
<organism>
    <name type="scientific">Methanococcus maripaludis (strain C7 / ATCC BAA-1331)</name>
    <dbReference type="NCBI Taxonomy" id="426368"/>
    <lineage>
        <taxon>Archaea</taxon>
        <taxon>Methanobacteriati</taxon>
        <taxon>Methanobacteriota</taxon>
        <taxon>Methanomada group</taxon>
        <taxon>Methanococci</taxon>
        <taxon>Methanococcales</taxon>
        <taxon>Methanococcaceae</taxon>
        <taxon>Methanococcus</taxon>
    </lineage>
</organism>
<comment type="function">
    <text evidence="1">Catalyzes the synthesis of the hydroxymethylpyrimidine phosphate (HMP-P) moiety of thiamine from aminoimidazole ribotide (AIR) in a radical S-adenosyl-L-methionine (SAM)-dependent reaction.</text>
</comment>
<comment type="catalytic activity">
    <reaction evidence="1">
        <text>5-amino-1-(5-phospho-beta-D-ribosyl)imidazole + S-adenosyl-L-methionine = 4-amino-2-methyl-5-(phosphooxymethyl)pyrimidine + CO + 5'-deoxyadenosine + formate + L-methionine + 3 H(+)</text>
        <dbReference type="Rhea" id="RHEA:24840"/>
        <dbReference type="ChEBI" id="CHEBI:15378"/>
        <dbReference type="ChEBI" id="CHEBI:15740"/>
        <dbReference type="ChEBI" id="CHEBI:17245"/>
        <dbReference type="ChEBI" id="CHEBI:17319"/>
        <dbReference type="ChEBI" id="CHEBI:57844"/>
        <dbReference type="ChEBI" id="CHEBI:58354"/>
        <dbReference type="ChEBI" id="CHEBI:59789"/>
        <dbReference type="ChEBI" id="CHEBI:137981"/>
        <dbReference type="EC" id="4.1.99.17"/>
    </reaction>
</comment>
<comment type="cofactor">
    <cofactor evidence="1">
        <name>[4Fe-4S] cluster</name>
        <dbReference type="ChEBI" id="CHEBI:49883"/>
    </cofactor>
    <text evidence="1">Binds 1 [4Fe-4S] cluster per subunit. The cluster is coordinated with 3 cysteines and an exchangeable S-adenosyl-L-methionine.</text>
</comment>
<comment type="pathway">
    <text evidence="1">Cofactor biosynthesis; thiamine diphosphate biosynthesis.</text>
</comment>
<comment type="similarity">
    <text evidence="1">Belongs to the ThiC family.</text>
</comment>
<gene>
    <name evidence="1" type="primary">thiC</name>
    <name type="ordered locus">MmarC7_1186</name>
</gene>
<accession>A6VIH6</accession>
<name>THIC_METM7</name>
<evidence type="ECO:0000255" key="1">
    <source>
        <dbReference type="HAMAP-Rule" id="MF_00089"/>
    </source>
</evidence>
<dbReference type="EC" id="4.1.99.17" evidence="1"/>
<dbReference type="EMBL" id="CP000745">
    <property type="protein sequence ID" value="ABR66252.1"/>
    <property type="molecule type" value="Genomic_DNA"/>
</dbReference>
<dbReference type="SMR" id="A6VIH6"/>
<dbReference type="STRING" id="426368.MmarC7_1186"/>
<dbReference type="KEGG" id="mmz:MmarC7_1186"/>
<dbReference type="eggNOG" id="arCOG02741">
    <property type="taxonomic scope" value="Archaea"/>
</dbReference>
<dbReference type="HOGENOM" id="CLU_013181_2_2_2"/>
<dbReference type="OrthoDB" id="335406at2157"/>
<dbReference type="UniPathway" id="UPA00060"/>
<dbReference type="GO" id="GO:0051539">
    <property type="term" value="F:4 iron, 4 sulfur cluster binding"/>
    <property type="evidence" value="ECO:0007669"/>
    <property type="project" value="UniProtKB-KW"/>
</dbReference>
<dbReference type="GO" id="GO:0016830">
    <property type="term" value="F:carbon-carbon lyase activity"/>
    <property type="evidence" value="ECO:0007669"/>
    <property type="project" value="InterPro"/>
</dbReference>
<dbReference type="GO" id="GO:0008270">
    <property type="term" value="F:zinc ion binding"/>
    <property type="evidence" value="ECO:0007669"/>
    <property type="project" value="UniProtKB-UniRule"/>
</dbReference>
<dbReference type="GO" id="GO:0009228">
    <property type="term" value="P:thiamine biosynthetic process"/>
    <property type="evidence" value="ECO:0007669"/>
    <property type="project" value="UniProtKB-KW"/>
</dbReference>
<dbReference type="GO" id="GO:0009229">
    <property type="term" value="P:thiamine diphosphate biosynthetic process"/>
    <property type="evidence" value="ECO:0007669"/>
    <property type="project" value="UniProtKB-UniRule"/>
</dbReference>
<dbReference type="FunFam" id="3.20.20.540:FF:000001">
    <property type="entry name" value="Phosphomethylpyrimidine synthase"/>
    <property type="match status" value="1"/>
</dbReference>
<dbReference type="Gene3D" id="3.20.20.540">
    <property type="entry name" value="Radical SAM ThiC family, central domain"/>
    <property type="match status" value="1"/>
</dbReference>
<dbReference type="HAMAP" id="MF_00089">
    <property type="entry name" value="ThiC"/>
    <property type="match status" value="1"/>
</dbReference>
<dbReference type="InterPro" id="IPR037509">
    <property type="entry name" value="ThiC"/>
</dbReference>
<dbReference type="InterPro" id="IPR038521">
    <property type="entry name" value="ThiC/Bza_core_dom"/>
</dbReference>
<dbReference type="InterPro" id="IPR002817">
    <property type="entry name" value="ThiC/BzaA/B"/>
</dbReference>
<dbReference type="NCBIfam" id="NF009895">
    <property type="entry name" value="PRK13352.1"/>
    <property type="match status" value="1"/>
</dbReference>
<dbReference type="NCBIfam" id="TIGR00190">
    <property type="entry name" value="thiC"/>
    <property type="match status" value="1"/>
</dbReference>
<dbReference type="PANTHER" id="PTHR30557:SF1">
    <property type="entry name" value="PHOSPHOMETHYLPYRIMIDINE SYNTHASE, CHLOROPLASTIC"/>
    <property type="match status" value="1"/>
</dbReference>
<dbReference type="PANTHER" id="PTHR30557">
    <property type="entry name" value="THIAMINE BIOSYNTHESIS PROTEIN THIC"/>
    <property type="match status" value="1"/>
</dbReference>
<dbReference type="Pfam" id="PF01964">
    <property type="entry name" value="ThiC_Rad_SAM"/>
    <property type="match status" value="1"/>
</dbReference>
<dbReference type="SFLD" id="SFLDF00407">
    <property type="entry name" value="phosphomethylpyrimidine_syntha"/>
    <property type="match status" value="1"/>
</dbReference>
<dbReference type="SFLD" id="SFLDG01114">
    <property type="entry name" value="phosphomethylpyrimidine_syntha"/>
    <property type="match status" value="1"/>
</dbReference>
<dbReference type="SFLD" id="SFLDS00113">
    <property type="entry name" value="Radical_SAM_Phosphomethylpyrim"/>
    <property type="match status" value="1"/>
</dbReference>
<sequence length="426" mass="47181">MTQMTDAKSGIITEEMKFVANEEGMDVETLKNLIAKGYVVIPKNVNRNTKPVGIGDNLRTKVNVNLGTSPDFVDIACELKKVEISNKYGADAIMDLSTGGNLPEIRKEIIKNTNLPIGTVPIYEVGVDAKQKYGRVIDMDEDLIFNVIERQAKEGVDFMTLHCGITKQTVNALNNDPRKMGVVSRGGAFLTAYIMYHDRENPLYKEFDYLLELLKEHDVTLSLGDGMRPGCLQDNTDRAQIQELITLGELVDKCREQGVQVMVEGPGHVPYNNIEANMKIQKTVCKNAPFYVLGPIVTDLAPGYDHITAAIGGTLAAVSGANFLCYVTPAEHVRLMKEDDVKEGLIASKIAAQAADVAKGHSIAWKLEKEMADARIKHDWDRQFEIALDSDKPRKMREEIPSKDEKACSVCGDYCALLMVEELGKR</sequence>